<gene>
    <name evidence="1" type="primary">yciZ</name>
    <name type="ordered locus">E2348C_1477</name>
</gene>
<protein>
    <recommendedName>
        <fullName evidence="1">UPF0509 protein YciZ</fullName>
    </recommendedName>
</protein>
<comment type="similarity">
    <text evidence="1">Belongs to the UPF0509 family.</text>
</comment>
<feature type="chain" id="PRO_1000186845" description="UPF0509 protein YciZ">
    <location>
        <begin position="1"/>
        <end position="57"/>
    </location>
</feature>
<proteinExistence type="inferred from homology"/>
<dbReference type="EMBL" id="FM180568">
    <property type="protein sequence ID" value="CAS09025.1"/>
    <property type="molecule type" value="Genomic_DNA"/>
</dbReference>
<dbReference type="RefSeq" id="WP_001288368.1">
    <property type="nucleotide sequence ID" value="NC_011601.1"/>
</dbReference>
<dbReference type="SMR" id="B7UR93"/>
<dbReference type="GeneID" id="93775408"/>
<dbReference type="KEGG" id="ecg:E2348C_1477"/>
<dbReference type="HOGENOM" id="CLU_180697_1_0_6"/>
<dbReference type="Proteomes" id="UP000008205">
    <property type="component" value="Chromosome"/>
</dbReference>
<dbReference type="HAMAP" id="MF_01641">
    <property type="entry name" value="UPF0509"/>
    <property type="match status" value="1"/>
</dbReference>
<dbReference type="InterPro" id="IPR020887">
    <property type="entry name" value="UPF0509"/>
</dbReference>
<dbReference type="NCBIfam" id="NF010179">
    <property type="entry name" value="PRK13658.1"/>
    <property type="match status" value="1"/>
</dbReference>
<dbReference type="Pfam" id="PF23675">
    <property type="entry name" value="YciZ"/>
    <property type="match status" value="1"/>
</dbReference>
<organism>
    <name type="scientific">Escherichia coli O127:H6 (strain E2348/69 / EPEC)</name>
    <dbReference type="NCBI Taxonomy" id="574521"/>
    <lineage>
        <taxon>Bacteria</taxon>
        <taxon>Pseudomonadati</taxon>
        <taxon>Pseudomonadota</taxon>
        <taxon>Gammaproteobacteria</taxon>
        <taxon>Enterobacterales</taxon>
        <taxon>Enterobacteriaceae</taxon>
        <taxon>Escherichia</taxon>
    </lineage>
</organism>
<reference key="1">
    <citation type="journal article" date="2009" name="J. Bacteriol.">
        <title>Complete genome sequence and comparative genome analysis of enteropathogenic Escherichia coli O127:H6 strain E2348/69.</title>
        <authorList>
            <person name="Iguchi A."/>
            <person name="Thomson N.R."/>
            <person name="Ogura Y."/>
            <person name="Saunders D."/>
            <person name="Ooka T."/>
            <person name="Henderson I.R."/>
            <person name="Harris D."/>
            <person name="Asadulghani M."/>
            <person name="Kurokawa K."/>
            <person name="Dean P."/>
            <person name="Kenny B."/>
            <person name="Quail M.A."/>
            <person name="Thurston S."/>
            <person name="Dougan G."/>
            <person name="Hayashi T."/>
            <person name="Parkhill J."/>
            <person name="Frankel G."/>
        </authorList>
    </citation>
    <scope>NUCLEOTIDE SEQUENCE [LARGE SCALE GENOMIC DNA]</scope>
    <source>
        <strain>E2348/69 / EPEC</strain>
    </source>
</reference>
<evidence type="ECO:0000255" key="1">
    <source>
        <dbReference type="HAMAP-Rule" id="MF_01641"/>
    </source>
</evidence>
<accession>B7UR93</accession>
<name>YCIZ_ECO27</name>
<sequence>MSEFDAQRVAERIDIVLDILVAGDYHSAIHNLEILKAELLRQVAESTPDIPKAPWEI</sequence>
<keyword id="KW-1185">Reference proteome</keyword>